<proteinExistence type="inferred from homology"/>
<gene>
    <name evidence="1" type="primary">mdh</name>
    <name type="ordered locus">YpsIP31758_3616</name>
</gene>
<comment type="function">
    <text evidence="1">Catalyzes the reversible oxidation of malate to oxaloacetate.</text>
</comment>
<comment type="catalytic activity">
    <reaction evidence="1">
        <text>(S)-malate + NAD(+) = oxaloacetate + NADH + H(+)</text>
        <dbReference type="Rhea" id="RHEA:21432"/>
        <dbReference type="ChEBI" id="CHEBI:15378"/>
        <dbReference type="ChEBI" id="CHEBI:15589"/>
        <dbReference type="ChEBI" id="CHEBI:16452"/>
        <dbReference type="ChEBI" id="CHEBI:57540"/>
        <dbReference type="ChEBI" id="CHEBI:57945"/>
        <dbReference type="EC" id="1.1.1.37"/>
    </reaction>
</comment>
<comment type="subunit">
    <text evidence="1">Homodimer.</text>
</comment>
<comment type="similarity">
    <text evidence="1">Belongs to the LDH/MDH superfamily. MDH type 1 family.</text>
</comment>
<evidence type="ECO:0000255" key="1">
    <source>
        <dbReference type="HAMAP-Rule" id="MF_01516"/>
    </source>
</evidence>
<dbReference type="EC" id="1.1.1.37" evidence="1"/>
<dbReference type="EMBL" id="CP000720">
    <property type="protein sequence ID" value="ABS47339.1"/>
    <property type="molecule type" value="Genomic_DNA"/>
</dbReference>
<dbReference type="RefSeq" id="WP_002210174.1">
    <property type="nucleotide sequence ID" value="NC_009708.1"/>
</dbReference>
<dbReference type="SMR" id="A7FMU2"/>
<dbReference type="GeneID" id="57975198"/>
<dbReference type="KEGG" id="ypi:YpsIP31758_3616"/>
<dbReference type="HOGENOM" id="CLU_047181_1_0_6"/>
<dbReference type="Proteomes" id="UP000002412">
    <property type="component" value="Chromosome"/>
</dbReference>
<dbReference type="GO" id="GO:0005737">
    <property type="term" value="C:cytoplasm"/>
    <property type="evidence" value="ECO:0007669"/>
    <property type="project" value="TreeGrafter"/>
</dbReference>
<dbReference type="GO" id="GO:0030060">
    <property type="term" value="F:L-malate dehydrogenase (NAD+) activity"/>
    <property type="evidence" value="ECO:0007669"/>
    <property type="project" value="UniProtKB-UniRule"/>
</dbReference>
<dbReference type="GO" id="GO:0006108">
    <property type="term" value="P:malate metabolic process"/>
    <property type="evidence" value="ECO:0007669"/>
    <property type="project" value="InterPro"/>
</dbReference>
<dbReference type="GO" id="GO:0006099">
    <property type="term" value="P:tricarboxylic acid cycle"/>
    <property type="evidence" value="ECO:0007669"/>
    <property type="project" value="UniProtKB-UniRule"/>
</dbReference>
<dbReference type="CDD" id="cd01337">
    <property type="entry name" value="MDH_glyoxysomal_mitochondrial"/>
    <property type="match status" value="1"/>
</dbReference>
<dbReference type="FunFam" id="3.40.50.720:FF:000017">
    <property type="entry name" value="Malate dehydrogenase"/>
    <property type="match status" value="1"/>
</dbReference>
<dbReference type="FunFam" id="3.90.110.10:FF:000001">
    <property type="entry name" value="Malate dehydrogenase"/>
    <property type="match status" value="1"/>
</dbReference>
<dbReference type="Gene3D" id="3.90.110.10">
    <property type="entry name" value="Lactate dehydrogenase/glycoside hydrolase, family 4, C-terminal"/>
    <property type="match status" value="1"/>
</dbReference>
<dbReference type="Gene3D" id="3.40.50.720">
    <property type="entry name" value="NAD(P)-binding Rossmann-like Domain"/>
    <property type="match status" value="1"/>
</dbReference>
<dbReference type="HAMAP" id="MF_01516">
    <property type="entry name" value="Malate_dehydrog_1"/>
    <property type="match status" value="1"/>
</dbReference>
<dbReference type="InterPro" id="IPR001557">
    <property type="entry name" value="L-lactate/malate_DH"/>
</dbReference>
<dbReference type="InterPro" id="IPR022383">
    <property type="entry name" value="Lactate/malate_DH_C"/>
</dbReference>
<dbReference type="InterPro" id="IPR001236">
    <property type="entry name" value="Lactate/malate_DH_N"/>
</dbReference>
<dbReference type="InterPro" id="IPR015955">
    <property type="entry name" value="Lactate_DH/Glyco_Ohase_4_C"/>
</dbReference>
<dbReference type="InterPro" id="IPR001252">
    <property type="entry name" value="Malate_DH_AS"/>
</dbReference>
<dbReference type="InterPro" id="IPR010097">
    <property type="entry name" value="Malate_DH_type1"/>
</dbReference>
<dbReference type="InterPro" id="IPR023958">
    <property type="entry name" value="Malate_DH_type1_bac"/>
</dbReference>
<dbReference type="InterPro" id="IPR036291">
    <property type="entry name" value="NAD(P)-bd_dom_sf"/>
</dbReference>
<dbReference type="NCBIfam" id="TIGR01772">
    <property type="entry name" value="MDH_euk_gproteo"/>
    <property type="match status" value="1"/>
</dbReference>
<dbReference type="PANTHER" id="PTHR11540">
    <property type="entry name" value="MALATE AND LACTATE DEHYDROGENASE"/>
    <property type="match status" value="1"/>
</dbReference>
<dbReference type="PANTHER" id="PTHR11540:SF16">
    <property type="entry name" value="MALATE DEHYDROGENASE, MITOCHONDRIAL"/>
    <property type="match status" value="1"/>
</dbReference>
<dbReference type="Pfam" id="PF02866">
    <property type="entry name" value="Ldh_1_C"/>
    <property type="match status" value="1"/>
</dbReference>
<dbReference type="Pfam" id="PF00056">
    <property type="entry name" value="Ldh_1_N"/>
    <property type="match status" value="1"/>
</dbReference>
<dbReference type="PIRSF" id="PIRSF000102">
    <property type="entry name" value="Lac_mal_DH"/>
    <property type="match status" value="1"/>
</dbReference>
<dbReference type="SUPFAM" id="SSF56327">
    <property type="entry name" value="LDH C-terminal domain-like"/>
    <property type="match status" value="1"/>
</dbReference>
<dbReference type="SUPFAM" id="SSF51735">
    <property type="entry name" value="NAD(P)-binding Rossmann-fold domains"/>
    <property type="match status" value="1"/>
</dbReference>
<dbReference type="PROSITE" id="PS00068">
    <property type="entry name" value="MDH"/>
    <property type="match status" value="1"/>
</dbReference>
<name>MDH_YERP3</name>
<feature type="chain" id="PRO_1000068596" description="Malate dehydrogenase">
    <location>
        <begin position="1"/>
        <end position="312"/>
    </location>
</feature>
<feature type="active site" description="Proton acceptor" evidence="1">
    <location>
        <position position="177"/>
    </location>
</feature>
<feature type="binding site" evidence="1">
    <location>
        <begin position="7"/>
        <end position="13"/>
    </location>
    <ligand>
        <name>NAD(+)</name>
        <dbReference type="ChEBI" id="CHEBI:57540"/>
    </ligand>
</feature>
<feature type="binding site" evidence="1">
    <location>
        <position position="34"/>
    </location>
    <ligand>
        <name>NAD(+)</name>
        <dbReference type="ChEBI" id="CHEBI:57540"/>
    </ligand>
</feature>
<feature type="binding site" evidence="1">
    <location>
        <position position="81"/>
    </location>
    <ligand>
        <name>substrate</name>
    </ligand>
</feature>
<feature type="binding site" evidence="1">
    <location>
        <position position="87"/>
    </location>
    <ligand>
        <name>substrate</name>
    </ligand>
</feature>
<feature type="binding site" evidence="1">
    <location>
        <position position="94"/>
    </location>
    <ligand>
        <name>NAD(+)</name>
        <dbReference type="ChEBI" id="CHEBI:57540"/>
    </ligand>
</feature>
<feature type="binding site" evidence="1">
    <location>
        <begin position="117"/>
        <end position="119"/>
    </location>
    <ligand>
        <name>NAD(+)</name>
        <dbReference type="ChEBI" id="CHEBI:57540"/>
    </ligand>
</feature>
<feature type="binding site" evidence="1">
    <location>
        <position position="119"/>
    </location>
    <ligand>
        <name>substrate</name>
    </ligand>
</feature>
<feature type="binding site" evidence="1">
    <location>
        <position position="153"/>
    </location>
    <ligand>
        <name>substrate</name>
    </ligand>
</feature>
<feature type="binding site" evidence="1">
    <location>
        <position position="227"/>
    </location>
    <ligand>
        <name>NAD(+)</name>
        <dbReference type="ChEBI" id="CHEBI:57540"/>
    </ligand>
</feature>
<accession>A7FMU2</accession>
<keyword id="KW-0520">NAD</keyword>
<keyword id="KW-0560">Oxidoreductase</keyword>
<keyword id="KW-0816">Tricarboxylic acid cycle</keyword>
<organism>
    <name type="scientific">Yersinia pseudotuberculosis serotype O:1b (strain IP 31758)</name>
    <dbReference type="NCBI Taxonomy" id="349747"/>
    <lineage>
        <taxon>Bacteria</taxon>
        <taxon>Pseudomonadati</taxon>
        <taxon>Pseudomonadota</taxon>
        <taxon>Gammaproteobacteria</taxon>
        <taxon>Enterobacterales</taxon>
        <taxon>Yersiniaceae</taxon>
        <taxon>Yersinia</taxon>
    </lineage>
</organism>
<protein>
    <recommendedName>
        <fullName evidence="1">Malate dehydrogenase</fullName>
        <ecNumber evidence="1">1.1.1.37</ecNumber>
    </recommendedName>
</protein>
<reference key="1">
    <citation type="journal article" date="2007" name="PLoS Genet.">
        <title>The complete genome sequence of Yersinia pseudotuberculosis IP31758, the causative agent of Far East scarlet-like fever.</title>
        <authorList>
            <person name="Eppinger M."/>
            <person name="Rosovitz M.J."/>
            <person name="Fricke W.F."/>
            <person name="Rasko D.A."/>
            <person name="Kokorina G."/>
            <person name="Fayolle C."/>
            <person name="Lindler L.E."/>
            <person name="Carniel E."/>
            <person name="Ravel J."/>
        </authorList>
    </citation>
    <scope>NUCLEOTIDE SEQUENCE [LARGE SCALE GENOMIC DNA]</scope>
    <source>
        <strain>IP 31758</strain>
    </source>
</reference>
<sequence length="312" mass="32625">MKVAVLGAAGGIGQALALLLKTQLPSGSDLSLYDIAPVTPGVAVDLSHIPTAVNIKGFSGEDATPALQGADIVLISAGVARKPGMDRSDLFNVNAGIVRNLVEQIARTCPNALIGIITNPVNTTVAIAAEVLKKAGVYDKNKLFGITTLDTIRSNTFVAELKGKQPQDIEVPVIGGHSGVTILPLLSQIPGVSFTEQEVADLTKRIQNAGTEVVEAKAGGGSATLSMGQAAARFGLSLVRALQGESNVVECSYVEGDGKYARFFAQPILLGKNGVAERKDIGKLSAFEQQALENMLDVLHKDIELGEKFVNQ</sequence>